<sequence length="130" mass="14721">MNIIEQLEREEIARLAKTIPDFEPGDTVIVNVRVKEGERTRVQAYEGVCIARNGGGLNESFTVRKISYGEGVERVFPVHSPMIDSIKVVRRGKVRRAKLYYLRDRRGKSARIVERNDRPAKAEKAPAAAE</sequence>
<feature type="chain" id="PRO_1000193864" description="Large ribosomal subunit protein bL19">
    <location>
        <begin position="1"/>
        <end position="130"/>
    </location>
</feature>
<name>RL19_METPB</name>
<accession>B1ZAP4</accession>
<gene>
    <name evidence="1" type="primary">rplS</name>
    <name type="ordered locus">Mpop_5273</name>
</gene>
<proteinExistence type="inferred from homology"/>
<protein>
    <recommendedName>
        <fullName evidence="1">Large ribosomal subunit protein bL19</fullName>
    </recommendedName>
    <alternativeName>
        <fullName evidence="2">50S ribosomal protein L19</fullName>
    </alternativeName>
</protein>
<dbReference type="EMBL" id="CP001029">
    <property type="protein sequence ID" value="ACB83367.1"/>
    <property type="molecule type" value="Genomic_DNA"/>
</dbReference>
<dbReference type="RefSeq" id="WP_012456963.1">
    <property type="nucleotide sequence ID" value="NC_010725.1"/>
</dbReference>
<dbReference type="SMR" id="B1ZAP4"/>
<dbReference type="STRING" id="441620.Mpop_5273"/>
<dbReference type="KEGG" id="mpo:Mpop_5273"/>
<dbReference type="eggNOG" id="COG0335">
    <property type="taxonomic scope" value="Bacteria"/>
</dbReference>
<dbReference type="HOGENOM" id="CLU_103507_0_2_5"/>
<dbReference type="OrthoDB" id="9803541at2"/>
<dbReference type="Proteomes" id="UP000007136">
    <property type="component" value="Chromosome"/>
</dbReference>
<dbReference type="GO" id="GO:0022625">
    <property type="term" value="C:cytosolic large ribosomal subunit"/>
    <property type="evidence" value="ECO:0007669"/>
    <property type="project" value="TreeGrafter"/>
</dbReference>
<dbReference type="GO" id="GO:0003735">
    <property type="term" value="F:structural constituent of ribosome"/>
    <property type="evidence" value="ECO:0007669"/>
    <property type="project" value="InterPro"/>
</dbReference>
<dbReference type="GO" id="GO:0006412">
    <property type="term" value="P:translation"/>
    <property type="evidence" value="ECO:0007669"/>
    <property type="project" value="UniProtKB-UniRule"/>
</dbReference>
<dbReference type="FunFam" id="2.30.30.790:FF:000001">
    <property type="entry name" value="50S ribosomal protein L19"/>
    <property type="match status" value="1"/>
</dbReference>
<dbReference type="Gene3D" id="2.30.30.790">
    <property type="match status" value="1"/>
</dbReference>
<dbReference type="HAMAP" id="MF_00402">
    <property type="entry name" value="Ribosomal_bL19"/>
    <property type="match status" value="1"/>
</dbReference>
<dbReference type="InterPro" id="IPR001857">
    <property type="entry name" value="Ribosomal_bL19"/>
</dbReference>
<dbReference type="InterPro" id="IPR018257">
    <property type="entry name" value="Ribosomal_bL19_CS"/>
</dbReference>
<dbReference type="InterPro" id="IPR038657">
    <property type="entry name" value="Ribosomal_bL19_sf"/>
</dbReference>
<dbReference type="InterPro" id="IPR008991">
    <property type="entry name" value="Translation_prot_SH3-like_sf"/>
</dbReference>
<dbReference type="NCBIfam" id="TIGR01024">
    <property type="entry name" value="rplS_bact"/>
    <property type="match status" value="1"/>
</dbReference>
<dbReference type="PANTHER" id="PTHR15680:SF9">
    <property type="entry name" value="LARGE RIBOSOMAL SUBUNIT PROTEIN BL19M"/>
    <property type="match status" value="1"/>
</dbReference>
<dbReference type="PANTHER" id="PTHR15680">
    <property type="entry name" value="RIBOSOMAL PROTEIN L19"/>
    <property type="match status" value="1"/>
</dbReference>
<dbReference type="Pfam" id="PF01245">
    <property type="entry name" value="Ribosomal_L19"/>
    <property type="match status" value="1"/>
</dbReference>
<dbReference type="PIRSF" id="PIRSF002191">
    <property type="entry name" value="Ribosomal_L19"/>
    <property type="match status" value="1"/>
</dbReference>
<dbReference type="PRINTS" id="PR00061">
    <property type="entry name" value="RIBOSOMALL19"/>
</dbReference>
<dbReference type="SUPFAM" id="SSF50104">
    <property type="entry name" value="Translation proteins SH3-like domain"/>
    <property type="match status" value="1"/>
</dbReference>
<dbReference type="PROSITE" id="PS01015">
    <property type="entry name" value="RIBOSOMAL_L19"/>
    <property type="match status" value="1"/>
</dbReference>
<evidence type="ECO:0000255" key="1">
    <source>
        <dbReference type="HAMAP-Rule" id="MF_00402"/>
    </source>
</evidence>
<evidence type="ECO:0000305" key="2"/>
<keyword id="KW-0687">Ribonucleoprotein</keyword>
<keyword id="KW-0689">Ribosomal protein</keyword>
<organism>
    <name type="scientific">Methylorubrum populi (strain ATCC BAA-705 / NCIMB 13946 / BJ001)</name>
    <name type="common">Methylobacterium populi</name>
    <dbReference type="NCBI Taxonomy" id="441620"/>
    <lineage>
        <taxon>Bacteria</taxon>
        <taxon>Pseudomonadati</taxon>
        <taxon>Pseudomonadota</taxon>
        <taxon>Alphaproteobacteria</taxon>
        <taxon>Hyphomicrobiales</taxon>
        <taxon>Methylobacteriaceae</taxon>
        <taxon>Methylorubrum</taxon>
    </lineage>
</organism>
<comment type="function">
    <text evidence="1">This protein is located at the 30S-50S ribosomal subunit interface and may play a role in the structure and function of the aminoacyl-tRNA binding site.</text>
</comment>
<comment type="similarity">
    <text evidence="1">Belongs to the bacterial ribosomal protein bL19 family.</text>
</comment>
<reference key="1">
    <citation type="submission" date="2008-04" db="EMBL/GenBank/DDBJ databases">
        <title>Complete sequence of chromosome of Methylobacterium populi BJ001.</title>
        <authorList>
            <consortium name="US DOE Joint Genome Institute"/>
            <person name="Copeland A."/>
            <person name="Lucas S."/>
            <person name="Lapidus A."/>
            <person name="Glavina del Rio T."/>
            <person name="Dalin E."/>
            <person name="Tice H."/>
            <person name="Bruce D."/>
            <person name="Goodwin L."/>
            <person name="Pitluck S."/>
            <person name="Chertkov O."/>
            <person name="Brettin T."/>
            <person name="Detter J.C."/>
            <person name="Han C."/>
            <person name="Kuske C.R."/>
            <person name="Schmutz J."/>
            <person name="Larimer F."/>
            <person name="Land M."/>
            <person name="Hauser L."/>
            <person name="Kyrpides N."/>
            <person name="Mikhailova N."/>
            <person name="Marx C."/>
            <person name="Richardson P."/>
        </authorList>
    </citation>
    <scope>NUCLEOTIDE SEQUENCE [LARGE SCALE GENOMIC DNA]</scope>
    <source>
        <strain>ATCC BAA-705 / NCIMB 13946 / BJ001</strain>
    </source>
</reference>